<proteinExistence type="inferred from homology"/>
<sequence length="288" mass="32523">MEFIGKIIGVFLGWKVGGFFGAIAGLILGSIADKKLYELGSVSSSFFKKKTTRQDLFMQTSFAVLGHLSKSKGRVTEEDIQLANQLMIQLKLDDAGRKLAQDAFRRGKESDFPIRQVIREFRIGCGQRADLLRMFLQVQVQAAFADSELHENEKEVLYVIAEELGLSRMQFEQMIAMEMAARAFTQGGFYQKYQQGAYQGGYQYQQQNSGGYQHASGPTLNDAYKVLGVTESDEQSTVKRAYRRLMNEHHPDKLVAKGLPPEMMEMAKEKTQQIQAAYDLICKAKGWK</sequence>
<gene>
    <name evidence="1" type="primary">djlA</name>
    <name type="ordered locus">HI_0271</name>
</gene>
<organism>
    <name type="scientific">Haemophilus influenzae (strain ATCC 51907 / DSM 11121 / KW20 / Rd)</name>
    <dbReference type="NCBI Taxonomy" id="71421"/>
    <lineage>
        <taxon>Bacteria</taxon>
        <taxon>Pseudomonadati</taxon>
        <taxon>Pseudomonadota</taxon>
        <taxon>Gammaproteobacteria</taxon>
        <taxon>Pasteurellales</taxon>
        <taxon>Pasteurellaceae</taxon>
        <taxon>Haemophilus</taxon>
    </lineage>
</organism>
<feature type="chain" id="PRO_0000209429" description="Co-chaperone protein DjlA">
    <location>
        <begin position="1"/>
        <end position="288"/>
    </location>
</feature>
<feature type="topological domain" description="Periplasmic" evidence="1">
    <location>
        <begin position="1"/>
        <end position="6"/>
    </location>
</feature>
<feature type="transmembrane region" description="Helical" evidence="1">
    <location>
        <begin position="7"/>
        <end position="30"/>
    </location>
</feature>
<feature type="topological domain" description="Cytoplasmic" evidence="1">
    <location>
        <begin position="31"/>
        <end position="288"/>
    </location>
</feature>
<feature type="domain" description="J" evidence="1">
    <location>
        <begin position="222"/>
        <end position="288"/>
    </location>
</feature>
<comment type="function">
    <text evidence="1">Regulatory DnaK co-chaperone. Direct interaction between DnaK and DjlA is needed for the induction of the wcaABCDE operon, involved in the synthesis of a colanic acid polysaccharide capsule, possibly through activation of the RcsB/RcsC phosphotransfer signaling pathway. The colanic acid capsule may help the bacterium survive conditions outside the host.</text>
</comment>
<comment type="subunit">
    <text evidence="1">Homodimer.</text>
</comment>
<comment type="subcellular location">
    <subcellularLocation>
        <location evidence="1">Cell inner membrane</location>
        <topology evidence="1">Single-pass type III membrane protein</topology>
    </subcellularLocation>
</comment>
<comment type="domain">
    <text evidence="1">The transmembrane domain is a dimerization domain.</text>
</comment>
<reference key="1">
    <citation type="journal article" date="1995" name="Science">
        <title>Whole-genome random sequencing and assembly of Haemophilus influenzae Rd.</title>
        <authorList>
            <person name="Fleischmann R.D."/>
            <person name="Adams M.D."/>
            <person name="White O."/>
            <person name="Clayton R.A."/>
            <person name="Kirkness E.F."/>
            <person name="Kerlavage A.R."/>
            <person name="Bult C.J."/>
            <person name="Tomb J.-F."/>
            <person name="Dougherty B.A."/>
            <person name="Merrick J.M."/>
            <person name="McKenney K."/>
            <person name="Sutton G.G."/>
            <person name="FitzHugh W."/>
            <person name="Fields C.A."/>
            <person name="Gocayne J.D."/>
            <person name="Scott J.D."/>
            <person name="Shirley R."/>
            <person name="Liu L.-I."/>
            <person name="Glodek A."/>
            <person name="Kelley J.M."/>
            <person name="Weidman J.F."/>
            <person name="Phillips C.A."/>
            <person name="Spriggs T."/>
            <person name="Hedblom E."/>
            <person name="Cotton M.D."/>
            <person name="Utterback T.R."/>
            <person name="Hanna M.C."/>
            <person name="Nguyen D.T."/>
            <person name="Saudek D.M."/>
            <person name="Brandon R.C."/>
            <person name="Fine L.D."/>
            <person name="Fritchman J.L."/>
            <person name="Fuhrmann J.L."/>
            <person name="Geoghagen N.S.M."/>
            <person name="Gnehm C.L."/>
            <person name="McDonald L.A."/>
            <person name="Small K.V."/>
            <person name="Fraser C.M."/>
            <person name="Smith H.O."/>
            <person name="Venter J.C."/>
        </authorList>
    </citation>
    <scope>NUCLEOTIDE SEQUENCE [LARGE SCALE GENOMIC DNA]</scope>
    <source>
        <strain>ATCC 51907 / DSM 11121 / KW20 / Rd</strain>
    </source>
</reference>
<name>DJLA_HAEIN</name>
<dbReference type="EMBL" id="L42023">
    <property type="protein sequence ID" value="AAC21937.1"/>
    <property type="molecule type" value="Genomic_DNA"/>
</dbReference>
<dbReference type="PIR" id="G64146">
    <property type="entry name" value="G64146"/>
</dbReference>
<dbReference type="RefSeq" id="NP_438440.1">
    <property type="nucleotide sequence ID" value="NC_000907.1"/>
</dbReference>
<dbReference type="STRING" id="71421.HI_0271"/>
<dbReference type="EnsemblBacteria" id="AAC21937">
    <property type="protein sequence ID" value="AAC21937"/>
    <property type="gene ID" value="HI_0271"/>
</dbReference>
<dbReference type="KEGG" id="hin:HI_0271"/>
<dbReference type="PATRIC" id="fig|71421.8.peg.286"/>
<dbReference type="eggNOG" id="COG1076">
    <property type="taxonomic scope" value="Bacteria"/>
</dbReference>
<dbReference type="HOGENOM" id="CLU_066221_1_0_6"/>
<dbReference type="OrthoDB" id="9782583at2"/>
<dbReference type="PhylomeDB" id="P44607"/>
<dbReference type="BioCyc" id="HINF71421:G1GJ1-286-MONOMER"/>
<dbReference type="Proteomes" id="UP000000579">
    <property type="component" value="Chromosome"/>
</dbReference>
<dbReference type="GO" id="GO:0005886">
    <property type="term" value="C:plasma membrane"/>
    <property type="evidence" value="ECO:0007669"/>
    <property type="project" value="UniProtKB-SubCell"/>
</dbReference>
<dbReference type="GO" id="GO:0051087">
    <property type="term" value="F:protein-folding chaperone binding"/>
    <property type="evidence" value="ECO:0007669"/>
    <property type="project" value="InterPro"/>
</dbReference>
<dbReference type="CDD" id="cd06257">
    <property type="entry name" value="DnaJ"/>
    <property type="match status" value="1"/>
</dbReference>
<dbReference type="CDD" id="cd07316">
    <property type="entry name" value="terB_like_DjlA"/>
    <property type="match status" value="1"/>
</dbReference>
<dbReference type="FunFam" id="1.10.287.110:FF:000011">
    <property type="entry name" value="Co-chaperone protein DjlA"/>
    <property type="match status" value="1"/>
</dbReference>
<dbReference type="Gene3D" id="1.10.287.110">
    <property type="entry name" value="DnaJ domain"/>
    <property type="match status" value="1"/>
</dbReference>
<dbReference type="Gene3D" id="1.10.3680.10">
    <property type="entry name" value="TerB-like"/>
    <property type="match status" value="1"/>
</dbReference>
<dbReference type="HAMAP" id="MF_01153">
    <property type="entry name" value="DjlA"/>
    <property type="match status" value="1"/>
</dbReference>
<dbReference type="InterPro" id="IPR023749">
    <property type="entry name" value="DjlA"/>
</dbReference>
<dbReference type="InterPro" id="IPR050817">
    <property type="entry name" value="DjlA_DnaK_co-chaperone"/>
</dbReference>
<dbReference type="InterPro" id="IPR007791">
    <property type="entry name" value="DjlA_N"/>
</dbReference>
<dbReference type="InterPro" id="IPR001623">
    <property type="entry name" value="DnaJ_domain"/>
</dbReference>
<dbReference type="InterPro" id="IPR036869">
    <property type="entry name" value="J_dom_sf"/>
</dbReference>
<dbReference type="InterPro" id="IPR029024">
    <property type="entry name" value="TerB-like"/>
</dbReference>
<dbReference type="NCBIfam" id="NF006948">
    <property type="entry name" value="PRK09430.1"/>
    <property type="match status" value="1"/>
</dbReference>
<dbReference type="PANTHER" id="PTHR24074">
    <property type="entry name" value="CO-CHAPERONE PROTEIN DJLA"/>
    <property type="match status" value="1"/>
</dbReference>
<dbReference type="Pfam" id="PF00226">
    <property type="entry name" value="DnaJ"/>
    <property type="match status" value="1"/>
</dbReference>
<dbReference type="Pfam" id="PF05099">
    <property type="entry name" value="TerB"/>
    <property type="match status" value="1"/>
</dbReference>
<dbReference type="PRINTS" id="PR00625">
    <property type="entry name" value="JDOMAIN"/>
</dbReference>
<dbReference type="SMART" id="SM00271">
    <property type="entry name" value="DnaJ"/>
    <property type="match status" value="1"/>
</dbReference>
<dbReference type="SUPFAM" id="SSF46565">
    <property type="entry name" value="Chaperone J-domain"/>
    <property type="match status" value="1"/>
</dbReference>
<dbReference type="PROSITE" id="PS50076">
    <property type="entry name" value="DNAJ_2"/>
    <property type="match status" value="1"/>
</dbReference>
<evidence type="ECO:0000255" key="1">
    <source>
        <dbReference type="HAMAP-Rule" id="MF_01153"/>
    </source>
</evidence>
<accession>P44607</accession>
<keyword id="KW-0997">Cell inner membrane</keyword>
<keyword id="KW-1003">Cell membrane</keyword>
<keyword id="KW-0143">Chaperone</keyword>
<keyword id="KW-0472">Membrane</keyword>
<keyword id="KW-1185">Reference proteome</keyword>
<keyword id="KW-0812">Transmembrane</keyword>
<keyword id="KW-1133">Transmembrane helix</keyword>
<protein>
    <recommendedName>
        <fullName evidence="1">Co-chaperone protein DjlA</fullName>
    </recommendedName>
</protein>